<sequence>MGDRNLTPKQFGALGEQYAAAWLEEHGWTTLSRNWHTRYGELDIVMLNPEYTVVFVEVKSRRSMHYGYPQEAITPAKQHNLRKAACDWLLDRRNRVPHTAVRFDVVTIVLRVGRPLVHHIENAF</sequence>
<evidence type="ECO:0000255" key="1">
    <source>
        <dbReference type="HAMAP-Rule" id="MF_00048"/>
    </source>
</evidence>
<evidence type="ECO:0000305" key="2"/>
<gene>
    <name type="ordered locus">Blon_1698</name>
    <name type="ordered locus">BLIJ_1758</name>
</gene>
<proteinExistence type="inferred from homology"/>
<protein>
    <recommendedName>
        <fullName evidence="1">UPF0102 protein Blon_1698/BLIJ_1758</fullName>
    </recommendedName>
</protein>
<feature type="chain" id="PRO_1000200126" description="UPF0102 protein Blon_1698/BLIJ_1758">
    <location>
        <begin position="1"/>
        <end position="124"/>
    </location>
</feature>
<reference key="1">
    <citation type="journal article" date="2008" name="Proc. Natl. Acad. Sci. U.S.A.">
        <title>The genome sequence of Bifidobacterium longum subsp. infantis reveals adaptations for milk utilization within the infant microbiome.</title>
        <authorList>
            <person name="Sela D.A."/>
            <person name="Chapman J."/>
            <person name="Adeuya A."/>
            <person name="Kim J.H."/>
            <person name="Chen F."/>
            <person name="Whitehead T.R."/>
            <person name="Lapidus A."/>
            <person name="Rokhsar D.S."/>
            <person name="Lebrilla C.B."/>
            <person name="German J.B."/>
            <person name="Price N.P."/>
            <person name="Richardson P.M."/>
            <person name="Mills D.A."/>
        </authorList>
    </citation>
    <scope>NUCLEOTIDE SEQUENCE [LARGE SCALE GENOMIC DNA]</scope>
    <source>
        <strain>ATCC 15697 / DSM 20088 / JCM 1222 / NCTC 11817 / S12</strain>
    </source>
</reference>
<reference key="2">
    <citation type="journal article" date="2011" name="Nature">
        <title>Bifidobacteria can protect from enteropathogenic infection through production of acetate.</title>
        <authorList>
            <person name="Fukuda S."/>
            <person name="Toh H."/>
            <person name="Hase K."/>
            <person name="Oshima K."/>
            <person name="Nakanishi Y."/>
            <person name="Yoshimura K."/>
            <person name="Tobe T."/>
            <person name="Clarke J.M."/>
            <person name="Topping D.L."/>
            <person name="Suzuki T."/>
            <person name="Taylor T.D."/>
            <person name="Itoh K."/>
            <person name="Kikuchi J."/>
            <person name="Morita H."/>
            <person name="Hattori M."/>
            <person name="Ohno H."/>
        </authorList>
    </citation>
    <scope>NUCLEOTIDE SEQUENCE [LARGE SCALE GENOMIC DNA]</scope>
    <source>
        <strain>ATCC 15697 / DSM 20088 / JCM 1222 / NCTC 11817 / S12</strain>
    </source>
</reference>
<name>Y1698_BIFLS</name>
<accession>B7GSU4</accession>
<accession>E8MLB2</accession>
<comment type="similarity">
    <text evidence="1">Belongs to the UPF0102 family.</text>
</comment>
<comment type="sequence caution" evidence="2">
    <conflict type="erroneous initiation">
        <sequence resource="EMBL-CDS" id="BAJ69339"/>
    </conflict>
    <text>Extended N-terminus.</text>
</comment>
<organism>
    <name type="scientific">Bifidobacterium longum subsp. infantis (strain ATCC 15697 / DSM 20088 / JCM 1222 / NCTC 11817 / S12)</name>
    <dbReference type="NCBI Taxonomy" id="391904"/>
    <lineage>
        <taxon>Bacteria</taxon>
        <taxon>Bacillati</taxon>
        <taxon>Actinomycetota</taxon>
        <taxon>Actinomycetes</taxon>
        <taxon>Bifidobacteriales</taxon>
        <taxon>Bifidobacteriaceae</taxon>
        <taxon>Bifidobacterium</taxon>
    </lineage>
</organism>
<dbReference type="EMBL" id="CP001095">
    <property type="protein sequence ID" value="ACJ52774.1"/>
    <property type="molecule type" value="Genomic_DNA"/>
</dbReference>
<dbReference type="EMBL" id="AP010889">
    <property type="protein sequence ID" value="BAJ69339.1"/>
    <property type="status" value="ALT_INIT"/>
    <property type="molecule type" value="Genomic_DNA"/>
</dbReference>
<dbReference type="SMR" id="B7GSU4"/>
<dbReference type="KEGG" id="bln:Blon_1698"/>
<dbReference type="KEGG" id="blon:BLIJ_1758"/>
<dbReference type="PATRIC" id="fig|391904.8.peg.1767"/>
<dbReference type="HOGENOM" id="CLU_115353_2_0_11"/>
<dbReference type="Proteomes" id="UP000001360">
    <property type="component" value="Chromosome"/>
</dbReference>
<dbReference type="GO" id="GO:0003676">
    <property type="term" value="F:nucleic acid binding"/>
    <property type="evidence" value="ECO:0007669"/>
    <property type="project" value="InterPro"/>
</dbReference>
<dbReference type="CDD" id="cd20736">
    <property type="entry name" value="PoNe_Nuclease"/>
    <property type="match status" value="1"/>
</dbReference>
<dbReference type="Gene3D" id="3.40.1350.10">
    <property type="match status" value="1"/>
</dbReference>
<dbReference type="HAMAP" id="MF_00048">
    <property type="entry name" value="UPF0102"/>
    <property type="match status" value="1"/>
</dbReference>
<dbReference type="InterPro" id="IPR011335">
    <property type="entry name" value="Restrct_endonuc-II-like"/>
</dbReference>
<dbReference type="InterPro" id="IPR011856">
    <property type="entry name" value="tRNA_endonuc-like_dom_sf"/>
</dbReference>
<dbReference type="InterPro" id="IPR003509">
    <property type="entry name" value="UPF0102_YraN-like"/>
</dbReference>
<dbReference type="NCBIfam" id="NF009150">
    <property type="entry name" value="PRK12497.1-3"/>
    <property type="match status" value="1"/>
</dbReference>
<dbReference type="NCBIfam" id="NF009154">
    <property type="entry name" value="PRK12497.3-3"/>
    <property type="match status" value="1"/>
</dbReference>
<dbReference type="NCBIfam" id="NF011274">
    <property type="entry name" value="PRK14681.1"/>
    <property type="match status" value="1"/>
</dbReference>
<dbReference type="NCBIfam" id="TIGR00252">
    <property type="entry name" value="YraN family protein"/>
    <property type="match status" value="1"/>
</dbReference>
<dbReference type="PANTHER" id="PTHR34039">
    <property type="entry name" value="UPF0102 PROTEIN YRAN"/>
    <property type="match status" value="1"/>
</dbReference>
<dbReference type="PANTHER" id="PTHR34039:SF1">
    <property type="entry name" value="UPF0102 PROTEIN YRAN"/>
    <property type="match status" value="1"/>
</dbReference>
<dbReference type="Pfam" id="PF02021">
    <property type="entry name" value="UPF0102"/>
    <property type="match status" value="1"/>
</dbReference>
<dbReference type="SUPFAM" id="SSF52980">
    <property type="entry name" value="Restriction endonuclease-like"/>
    <property type="match status" value="1"/>
</dbReference>